<protein>
    <recommendedName>
        <fullName>Major core protein OPG136 precursor</fullName>
        <shortName>p4a</shortName>
    </recommendedName>
    <alternativeName>
        <fullName>Virion core protein 4a precursor</fullName>
    </alternativeName>
    <component>
        <recommendedName>
            <fullName>Core protein OPG136</fullName>
        </recommendedName>
        <alternativeName>
            <fullName>62 kDa peptide</fullName>
        </alternativeName>
    </component>
    <component>
        <recommendedName>
            <fullName>23 kDa protein</fullName>
            <shortName>23K</shortName>
        </recommendedName>
    </component>
</protein>
<keyword id="KW-1185">Reference proteome</keyword>
<keyword id="KW-0946">Virion</keyword>
<proteinExistence type="inferred from homology"/>
<gene>
    <name type="primary">OPG136</name>
    <name type="ORF">A10L</name>
</gene>
<organismHost>
    <name type="scientific">Homo sapiens</name>
    <name type="common">Human</name>
    <dbReference type="NCBI Taxonomy" id="9606"/>
</organismHost>
<sequence>MMPIKSIVTLDQLEDSEYLFRIVSTVLPHLCLDYKVCDQLKTTFVHPFDVFLNNSLGSVTKQDELQAAISKLGINYLIDTTSRELKLFNVTLNAGNIDIINTPINISSETNPIINTHSFYDLPPFTQHLLNIRLTDTEYRARFIGGYIKPDGSDSMDVLAEKKYPDLNFDNTYLFNILYKDVINAPIKEFKAKIVNGVLSRQDFDNLIGVRQYITAQDQPRFDNTYAIADAARHYGVNLNTLPLPNVDLTTMPTYKHLIMYEQYFVDDYDRVPIYYNGNRVIFDDEIINFCISMRYQSLIPRLVEFFPDIPVNNNIVLHTRDPQNAAVNVTVGLPNMQFVDINRNNKFFINFFNLLAKEQRSTAIKVTKSMFWDGMDYEEYKSKNLQDMMFINSTCYVFGLYNHNNTTYCSILSDIISAEKTPIRVCLLPRVVGGKTVTDLISETLKSISSMTIREFPKKDKSSIMHIGLSETGFMRFFQLLRLMADKPHETAIKEVVMAYVGIKLGDKGSPYYIRKESYQDFIYLLFASMGFKVTTRRSIMGSNNISIISIRPRVTKQYIVTTLMKTSCSKNEAEKLITSAFDLLNFMVSVSDFRDYQSYRQYRNYCPRYFYAGSPEGEETIICDSEPISILDRIDTRGIFSAYTINEMMDTDIFSPENKAFKNNLSRFIESGDITGEDIFCAMPYNILDRIITNAGTCTVSIGDMLDNITTQSDCNMTNEITDMINASLKNTISKDNNMLVSQALDSVANHSKQKIGDLRQSSCKMALLFKNLATSIYTIERIFNAKVGDDVKASMLEKYKVFTDISMSLYKDLIAMENLKAMLYIIRRSGCRIDDAQITTDDLVKSYSLIRPKILSMINYYNEMSRGYFEHMKKNLNMTDGDSVSFDDE</sequence>
<name>PG136_VAR67</name>
<evidence type="ECO:0000250" key="1">
    <source>
        <dbReference type="UniProtKB" id="P16715"/>
    </source>
</evidence>
<evidence type="ECO:0000305" key="2"/>
<accession>P0DOL1</accession>
<accession>P33817</accession>
<dbReference type="EMBL" id="X69198">
    <property type="protein sequence ID" value="CAA49055.1"/>
    <property type="molecule type" value="Genomic_DNA"/>
</dbReference>
<dbReference type="PIR" id="B36849">
    <property type="entry name" value="B36849"/>
</dbReference>
<dbReference type="RefSeq" id="NP_042158.1">
    <property type="nucleotide sequence ID" value="NC_001611.1"/>
</dbReference>
<dbReference type="SMR" id="P0DOL1"/>
<dbReference type="GeneID" id="1486485"/>
<dbReference type="KEGG" id="vg:1486485"/>
<dbReference type="Proteomes" id="UP000002060">
    <property type="component" value="Segment"/>
</dbReference>
<dbReference type="GO" id="GO:0044423">
    <property type="term" value="C:virion component"/>
    <property type="evidence" value="ECO:0007669"/>
    <property type="project" value="UniProtKB-KW"/>
</dbReference>
<dbReference type="GO" id="GO:0005198">
    <property type="term" value="F:structural molecule activity"/>
    <property type="evidence" value="ECO:0007669"/>
    <property type="project" value="InterPro"/>
</dbReference>
<dbReference type="InterPro" id="IPR005058">
    <property type="entry name" value="Poxvirus_P4A"/>
</dbReference>
<dbReference type="Pfam" id="PF03395">
    <property type="entry name" value="Pox_P4A"/>
    <property type="match status" value="1"/>
</dbReference>
<feature type="chain" id="PRO_0000413911" description="Major core protein OPG136 precursor">
    <location>
        <begin position="1"/>
        <end position="892"/>
    </location>
</feature>
<feature type="chain" id="PRO_0000040578" description="Core protein OPG136" evidence="1">
    <location>
        <begin position="1"/>
        <end position="615"/>
    </location>
</feature>
<feature type="propeptide" id="PRO_0000413912" evidence="1">
    <location>
        <begin position="616"/>
        <end position="698"/>
    </location>
</feature>
<feature type="chain" id="PRO_0000040580" description="23 kDa protein" evidence="1">
    <location>
        <begin position="699"/>
        <end position="892"/>
    </location>
</feature>
<feature type="site" description="Cleavage; by OPG083" evidence="1">
    <location>
        <begin position="615"/>
        <end position="616"/>
    </location>
</feature>
<feature type="site" description="Cleavage; by OPG083" evidence="1">
    <location>
        <begin position="698"/>
        <end position="699"/>
    </location>
</feature>
<comment type="function">
    <text evidence="1">Core protein 4a is the most abundant virion protein. Major component of the virion core that undergoes proteolytic processing during the immature virion (IV) to mature virion (MV) transition.</text>
</comment>
<comment type="subunit">
    <text evidence="1">Interacts with P39/A4.</text>
</comment>
<comment type="subcellular location">
    <molecule>Core protein OPG136</molecule>
    <subcellularLocation>
        <location evidence="1">Virion</location>
    </subcellularLocation>
    <text evidence="1">Probably localizes to the virion core wall.</text>
</comment>
<comment type="PTM">
    <text evidence="1">The precursor is cleaved by OPG083 to give rise to the 62 kDa mature protein during virion maturation. Proteolytic cleavage of major core proteins OPG136, OPG129, and OPG098, which occurs at a late stage of core formation, is required for production of infectious mature virions (MV).</text>
</comment>
<comment type="similarity">
    <text evidence="2">Belongs to the orthopxvirus protein OPG136 family.</text>
</comment>
<organism>
    <name type="scientific">Variola virus (isolate Human/India/Ind3/1967)</name>
    <name type="common">VARV</name>
    <name type="synonym">Smallpox virus</name>
    <dbReference type="NCBI Taxonomy" id="587200"/>
    <lineage>
        <taxon>Viruses</taxon>
        <taxon>Varidnaviria</taxon>
        <taxon>Bamfordvirae</taxon>
        <taxon>Nucleocytoviricota</taxon>
        <taxon>Pokkesviricetes</taxon>
        <taxon>Chitovirales</taxon>
        <taxon>Poxviridae</taxon>
        <taxon>Chordopoxvirinae</taxon>
        <taxon>Orthopoxvirus</taxon>
        <taxon>Variola virus</taxon>
    </lineage>
</organism>
<reference key="1">
    <citation type="journal article" date="1993" name="FEBS Lett.">
        <title>Genes of variola and vaccinia viruses necessary to overcome the host protective mechanisms.</title>
        <authorList>
            <person name="Shchelkunov S.N."/>
            <person name="Blinov V.M."/>
            <person name="Sandakhchiev L.S."/>
        </authorList>
    </citation>
    <scope>NUCLEOTIDE SEQUENCE [LARGE SCALE GENOMIC DNA]</scope>
</reference>